<accession>P00660</accession>
<name>RNAS1_CONTA</name>
<sequence>KESAAAKFERQHMDSSTSSASSSNYCNQMMKSRNLTQDRCKPVNTFVHEPLADVQAVCSQKNVACKNGQTNCYQSYSTMSITDCRETGSSKYPNCAYKATQAKKHIIVACEGNPYVPVHFDASV</sequence>
<proteinExistence type="evidence at protein level"/>
<comment type="function">
    <text evidence="1">Endonuclease that catalyzes the cleavage of RNA on the 3' side of pyrimidine nucleotides. Acts on single-stranded and double-stranded RNA (By similarity).</text>
</comment>
<comment type="catalytic activity">
    <reaction>
        <text>an [RNA] containing cytidine + H2O = an [RNA]-3'-cytidine-3'-phosphate + a 5'-hydroxy-ribonucleotide-3'-[RNA].</text>
        <dbReference type="EC" id="4.6.1.18"/>
    </reaction>
</comment>
<comment type="catalytic activity">
    <reaction>
        <text>an [RNA] containing uridine + H2O = an [RNA]-3'-uridine-3'-phosphate + a 5'-hydroxy-ribonucleotide-3'-[RNA].</text>
        <dbReference type="EC" id="4.6.1.18"/>
    </reaction>
</comment>
<comment type="subunit">
    <text evidence="1">Monomer. Interacts with and forms tight 1:1 complexes with RNH1. Dimerization of two such complexes may occur. Interaction with RNH1 inhibits this protein (By similarity).</text>
</comment>
<comment type="subcellular location">
    <subcellularLocation>
        <location>Secreted</location>
    </subcellularLocation>
</comment>
<comment type="tissue specificity">
    <text>Pancreas.</text>
</comment>
<comment type="similarity">
    <text evidence="3">Belongs to the pancreatic ribonuclease family.</text>
</comment>
<feature type="chain" id="PRO_0000057193" description="Ribonuclease pancreatic">
    <location>
        <begin position="1"/>
        <end position="124"/>
    </location>
</feature>
<feature type="region of interest" description="Disordered" evidence="2">
    <location>
        <begin position="1"/>
        <end position="24"/>
    </location>
</feature>
<feature type="compositionally biased region" description="Basic and acidic residues" evidence="2">
    <location>
        <begin position="1"/>
        <end position="13"/>
    </location>
</feature>
<feature type="active site" description="Proton acceptor">
    <location>
        <position position="12"/>
    </location>
</feature>
<feature type="active site" description="Proton donor">
    <location>
        <position position="119"/>
    </location>
</feature>
<feature type="binding site">
    <location>
        <position position="7"/>
    </location>
    <ligand>
        <name>substrate</name>
    </ligand>
</feature>
<feature type="binding site">
    <location>
        <position position="10"/>
    </location>
    <ligand>
        <name>substrate</name>
    </ligand>
</feature>
<feature type="binding site">
    <location>
        <begin position="41"/>
        <end position="45"/>
    </location>
    <ligand>
        <name>substrate</name>
    </ligand>
</feature>
<feature type="binding site">
    <location>
        <position position="66"/>
    </location>
    <ligand>
        <name>substrate</name>
    </ligand>
</feature>
<feature type="binding site">
    <location>
        <position position="85"/>
    </location>
    <ligand>
        <name>substrate</name>
    </ligand>
</feature>
<feature type="disulfide bond">
    <location>
        <begin position="26"/>
        <end position="84"/>
    </location>
</feature>
<feature type="disulfide bond">
    <location>
        <begin position="40"/>
        <end position="95"/>
    </location>
</feature>
<feature type="disulfide bond">
    <location>
        <begin position="58"/>
        <end position="110"/>
    </location>
</feature>
<feature type="disulfide bond">
    <location>
        <begin position="65"/>
        <end position="72"/>
    </location>
</feature>
<dbReference type="EC" id="4.6.1.18"/>
<dbReference type="PIR" id="A00808">
    <property type="entry name" value="NRGN"/>
</dbReference>
<dbReference type="SMR" id="P00660"/>
<dbReference type="GO" id="GO:0005576">
    <property type="term" value="C:extracellular region"/>
    <property type="evidence" value="ECO:0007669"/>
    <property type="project" value="UniProtKB-SubCell"/>
</dbReference>
<dbReference type="GO" id="GO:0016829">
    <property type="term" value="F:lyase activity"/>
    <property type="evidence" value="ECO:0007669"/>
    <property type="project" value="UniProtKB-KW"/>
</dbReference>
<dbReference type="GO" id="GO:0003676">
    <property type="term" value="F:nucleic acid binding"/>
    <property type="evidence" value="ECO:0007669"/>
    <property type="project" value="InterPro"/>
</dbReference>
<dbReference type="GO" id="GO:0004522">
    <property type="term" value="F:ribonuclease A activity"/>
    <property type="evidence" value="ECO:0007669"/>
    <property type="project" value="UniProtKB-EC"/>
</dbReference>
<dbReference type="GO" id="GO:0050830">
    <property type="term" value="P:defense response to Gram-positive bacterium"/>
    <property type="evidence" value="ECO:0007669"/>
    <property type="project" value="TreeGrafter"/>
</dbReference>
<dbReference type="CDD" id="cd06265">
    <property type="entry name" value="RNase_A_canonical"/>
    <property type="match status" value="1"/>
</dbReference>
<dbReference type="FunFam" id="3.10.130.10:FF:000001">
    <property type="entry name" value="Ribonuclease pancreatic"/>
    <property type="match status" value="1"/>
</dbReference>
<dbReference type="Gene3D" id="3.10.130.10">
    <property type="entry name" value="Ribonuclease A-like domain"/>
    <property type="match status" value="1"/>
</dbReference>
<dbReference type="InterPro" id="IPR001427">
    <property type="entry name" value="RNaseA"/>
</dbReference>
<dbReference type="InterPro" id="IPR036816">
    <property type="entry name" value="RNaseA-like_dom_sf"/>
</dbReference>
<dbReference type="InterPro" id="IPR023411">
    <property type="entry name" value="RNaseA_AS"/>
</dbReference>
<dbReference type="InterPro" id="IPR023412">
    <property type="entry name" value="RNaseA_domain"/>
</dbReference>
<dbReference type="PANTHER" id="PTHR11437">
    <property type="entry name" value="RIBONUCLEASE"/>
    <property type="match status" value="1"/>
</dbReference>
<dbReference type="PANTHER" id="PTHR11437:SF24">
    <property type="entry name" value="RIBONUCLEASE PANCREATIC"/>
    <property type="match status" value="1"/>
</dbReference>
<dbReference type="Pfam" id="PF00074">
    <property type="entry name" value="RnaseA"/>
    <property type="match status" value="1"/>
</dbReference>
<dbReference type="PRINTS" id="PR00794">
    <property type="entry name" value="RIBONUCLEASE"/>
</dbReference>
<dbReference type="SMART" id="SM00092">
    <property type="entry name" value="RNAse_Pc"/>
    <property type="match status" value="1"/>
</dbReference>
<dbReference type="SUPFAM" id="SSF54076">
    <property type="entry name" value="RNase A-like"/>
    <property type="match status" value="1"/>
</dbReference>
<dbReference type="PROSITE" id="PS00127">
    <property type="entry name" value="RNASE_PANCREATIC"/>
    <property type="match status" value="1"/>
</dbReference>
<protein>
    <recommendedName>
        <fullName>Ribonuclease pancreatic</fullName>
        <ecNumber>4.6.1.18</ecNumber>
    </recommendedName>
    <alternativeName>
        <fullName>RNase 1</fullName>
    </alternativeName>
    <alternativeName>
        <fullName>RNase A</fullName>
    </alternativeName>
</protein>
<evidence type="ECO:0000250" key="1"/>
<evidence type="ECO:0000256" key="2">
    <source>
        <dbReference type="SAM" id="MobiDB-lite"/>
    </source>
</evidence>
<evidence type="ECO:0000305" key="3"/>
<gene>
    <name type="primary">RNASE1</name>
    <name type="synonym">RNS1</name>
</gene>
<keyword id="KW-0903">Direct protein sequencing</keyword>
<keyword id="KW-1015">Disulfide bond</keyword>
<keyword id="KW-0255">Endonuclease</keyword>
<keyword id="KW-0378">Hydrolase</keyword>
<keyword id="KW-0456">Lyase</keyword>
<keyword id="KW-0540">Nuclease</keyword>
<keyword id="KW-0964">Secreted</keyword>
<reference key="1">
    <citation type="journal article" date="1975" name="FEBS Lett.">
        <title>The amino acid sequence of gnu pancreatic ribonuclease.</title>
        <authorList>
            <person name="Groen G."/>
            <person name="Welling G.W."/>
            <person name="Beintema J.J."/>
        </authorList>
    </citation>
    <scope>PROTEIN SEQUENCE</scope>
    <source>
        <tissue>Pancreas</tissue>
    </source>
</reference>
<organism>
    <name type="scientific">Connochaetes taurinus</name>
    <name type="common">Blue wildebeest</name>
    <dbReference type="NCBI Taxonomy" id="9927"/>
    <lineage>
        <taxon>Eukaryota</taxon>
        <taxon>Metazoa</taxon>
        <taxon>Chordata</taxon>
        <taxon>Craniata</taxon>
        <taxon>Vertebrata</taxon>
        <taxon>Euteleostomi</taxon>
        <taxon>Mammalia</taxon>
        <taxon>Eutheria</taxon>
        <taxon>Laurasiatheria</taxon>
        <taxon>Artiodactyla</taxon>
        <taxon>Ruminantia</taxon>
        <taxon>Pecora</taxon>
        <taxon>Bovidae</taxon>
        <taxon>Alcelaphinae</taxon>
        <taxon>Connochaetes</taxon>
    </lineage>
</organism>